<protein>
    <recommendedName>
        <fullName evidence="1">Small ribosomal subunit protein uS8</fullName>
    </recommendedName>
    <alternativeName>
        <fullName evidence="2">30S ribosomal protein S8</fullName>
    </alternativeName>
</protein>
<sequence length="132" mass="14219">MQATDVIADMLTRIRNACSAKHETVDIPASNIKRAIANILLEEGYIKGIEEIDDGKQGVLRLKLKYTANKQNVISGLKRISKPGLRVYAGKSEIPKVLGGLGIAIISTSKGIMTDKKARAEGVGGEVLAFVW</sequence>
<name>RS8_ACET2</name>
<gene>
    <name evidence="1" type="primary">rpsH</name>
    <name type="ordered locus">Cthe_2917</name>
</gene>
<reference key="1">
    <citation type="submission" date="2007-02" db="EMBL/GenBank/DDBJ databases">
        <title>Complete sequence of Clostridium thermocellum ATCC 27405.</title>
        <authorList>
            <consortium name="US DOE Joint Genome Institute"/>
            <person name="Copeland A."/>
            <person name="Lucas S."/>
            <person name="Lapidus A."/>
            <person name="Barry K."/>
            <person name="Detter J.C."/>
            <person name="Glavina del Rio T."/>
            <person name="Hammon N."/>
            <person name="Israni S."/>
            <person name="Dalin E."/>
            <person name="Tice H."/>
            <person name="Pitluck S."/>
            <person name="Chertkov O."/>
            <person name="Brettin T."/>
            <person name="Bruce D."/>
            <person name="Han C."/>
            <person name="Tapia R."/>
            <person name="Gilna P."/>
            <person name="Schmutz J."/>
            <person name="Larimer F."/>
            <person name="Land M."/>
            <person name="Hauser L."/>
            <person name="Kyrpides N."/>
            <person name="Mikhailova N."/>
            <person name="Wu J.H.D."/>
            <person name="Newcomb M."/>
            <person name="Richardson P."/>
        </authorList>
    </citation>
    <scope>NUCLEOTIDE SEQUENCE [LARGE SCALE GENOMIC DNA]</scope>
    <source>
        <strain>ATCC 27405 / DSM 1237 / JCM 9322 / NBRC 103400 / NCIMB 10682 / NRRL B-4536 / VPI 7372</strain>
    </source>
</reference>
<accession>A3DJI6</accession>
<dbReference type="EMBL" id="CP000568">
    <property type="protein sequence ID" value="ABN54115.1"/>
    <property type="molecule type" value="Genomic_DNA"/>
</dbReference>
<dbReference type="RefSeq" id="WP_003514651.1">
    <property type="nucleotide sequence ID" value="NC_009012.1"/>
</dbReference>
<dbReference type="SMR" id="A3DJI6"/>
<dbReference type="STRING" id="203119.Cthe_2917"/>
<dbReference type="GeneID" id="35806197"/>
<dbReference type="KEGG" id="cth:Cthe_2917"/>
<dbReference type="eggNOG" id="COG0096">
    <property type="taxonomic scope" value="Bacteria"/>
</dbReference>
<dbReference type="HOGENOM" id="CLU_098428_0_2_9"/>
<dbReference type="OrthoDB" id="9802617at2"/>
<dbReference type="Proteomes" id="UP000002145">
    <property type="component" value="Chromosome"/>
</dbReference>
<dbReference type="GO" id="GO:1990904">
    <property type="term" value="C:ribonucleoprotein complex"/>
    <property type="evidence" value="ECO:0007669"/>
    <property type="project" value="UniProtKB-KW"/>
</dbReference>
<dbReference type="GO" id="GO:0005840">
    <property type="term" value="C:ribosome"/>
    <property type="evidence" value="ECO:0007669"/>
    <property type="project" value="UniProtKB-KW"/>
</dbReference>
<dbReference type="GO" id="GO:0019843">
    <property type="term" value="F:rRNA binding"/>
    <property type="evidence" value="ECO:0007669"/>
    <property type="project" value="UniProtKB-UniRule"/>
</dbReference>
<dbReference type="GO" id="GO:0003735">
    <property type="term" value="F:structural constituent of ribosome"/>
    <property type="evidence" value="ECO:0007669"/>
    <property type="project" value="InterPro"/>
</dbReference>
<dbReference type="GO" id="GO:0006412">
    <property type="term" value="P:translation"/>
    <property type="evidence" value="ECO:0007669"/>
    <property type="project" value="UniProtKB-UniRule"/>
</dbReference>
<dbReference type="FunFam" id="3.30.1370.30:FF:000002">
    <property type="entry name" value="30S ribosomal protein S8"/>
    <property type="match status" value="1"/>
</dbReference>
<dbReference type="FunFam" id="3.30.1490.10:FF:000001">
    <property type="entry name" value="30S ribosomal protein S8"/>
    <property type="match status" value="1"/>
</dbReference>
<dbReference type="Gene3D" id="3.30.1370.30">
    <property type="match status" value="1"/>
</dbReference>
<dbReference type="Gene3D" id="3.30.1490.10">
    <property type="match status" value="1"/>
</dbReference>
<dbReference type="HAMAP" id="MF_01302_B">
    <property type="entry name" value="Ribosomal_uS8_B"/>
    <property type="match status" value="1"/>
</dbReference>
<dbReference type="InterPro" id="IPR000630">
    <property type="entry name" value="Ribosomal_uS8"/>
</dbReference>
<dbReference type="InterPro" id="IPR047863">
    <property type="entry name" value="Ribosomal_uS8_CS"/>
</dbReference>
<dbReference type="InterPro" id="IPR035987">
    <property type="entry name" value="Ribosomal_uS8_sf"/>
</dbReference>
<dbReference type="NCBIfam" id="NF001109">
    <property type="entry name" value="PRK00136.1"/>
    <property type="match status" value="1"/>
</dbReference>
<dbReference type="PANTHER" id="PTHR11758">
    <property type="entry name" value="40S RIBOSOMAL PROTEIN S15A"/>
    <property type="match status" value="1"/>
</dbReference>
<dbReference type="Pfam" id="PF00410">
    <property type="entry name" value="Ribosomal_S8"/>
    <property type="match status" value="1"/>
</dbReference>
<dbReference type="SUPFAM" id="SSF56047">
    <property type="entry name" value="Ribosomal protein S8"/>
    <property type="match status" value="1"/>
</dbReference>
<dbReference type="PROSITE" id="PS00053">
    <property type="entry name" value="RIBOSOMAL_S8"/>
    <property type="match status" value="1"/>
</dbReference>
<proteinExistence type="inferred from homology"/>
<organism>
    <name type="scientific">Acetivibrio thermocellus (strain ATCC 27405 / DSM 1237 / JCM 9322 / NBRC 103400 / NCIMB 10682 / NRRL B-4536 / VPI 7372)</name>
    <name type="common">Clostridium thermocellum</name>
    <dbReference type="NCBI Taxonomy" id="203119"/>
    <lineage>
        <taxon>Bacteria</taxon>
        <taxon>Bacillati</taxon>
        <taxon>Bacillota</taxon>
        <taxon>Clostridia</taxon>
        <taxon>Eubacteriales</taxon>
        <taxon>Oscillospiraceae</taxon>
        <taxon>Acetivibrio</taxon>
    </lineage>
</organism>
<feature type="chain" id="PRO_0000290825" description="Small ribosomal subunit protein uS8">
    <location>
        <begin position="1"/>
        <end position="132"/>
    </location>
</feature>
<evidence type="ECO:0000255" key="1">
    <source>
        <dbReference type="HAMAP-Rule" id="MF_01302"/>
    </source>
</evidence>
<evidence type="ECO:0000305" key="2"/>
<keyword id="KW-1185">Reference proteome</keyword>
<keyword id="KW-0687">Ribonucleoprotein</keyword>
<keyword id="KW-0689">Ribosomal protein</keyword>
<keyword id="KW-0694">RNA-binding</keyword>
<keyword id="KW-0699">rRNA-binding</keyword>
<comment type="function">
    <text evidence="1">One of the primary rRNA binding proteins, it binds directly to 16S rRNA central domain where it helps coordinate assembly of the platform of the 30S subunit.</text>
</comment>
<comment type="subunit">
    <text evidence="1">Part of the 30S ribosomal subunit. Contacts proteins S5 and S12.</text>
</comment>
<comment type="similarity">
    <text evidence="1">Belongs to the universal ribosomal protein uS8 family.</text>
</comment>